<accession>P51219</accession>
<sequence length="201" mass="22809">MSRYRGPRVRISRRLGDLPGLSRKAIKRPYPPGEHGQKPRKPSEYAVRLEEKQKLRFNYGLSEKQLFKYVKAAKKLQGSTGQILLQLLEMRLDNTIFRLGMAPTIPAARQLVNHGHICINGKVVSICSYQCKPGELITVKPQESSKQLVESYLAFPGLANIPSHLELNKSNLSGKINGVIDREWVALQLNELLVVEYYSRK</sequence>
<gene>
    <name type="primary">rps4</name>
</gene>
<organism>
    <name type="scientific">Porphyra purpurea</name>
    <name type="common">Red seaweed</name>
    <name type="synonym">Ulva purpurea</name>
    <dbReference type="NCBI Taxonomy" id="2787"/>
    <lineage>
        <taxon>Eukaryota</taxon>
        <taxon>Rhodophyta</taxon>
        <taxon>Bangiophyceae</taxon>
        <taxon>Bangiales</taxon>
        <taxon>Bangiaceae</taxon>
        <taxon>Porphyra</taxon>
    </lineage>
</organism>
<evidence type="ECO:0000250" key="1"/>
<evidence type="ECO:0000256" key="2">
    <source>
        <dbReference type="SAM" id="MobiDB-lite"/>
    </source>
</evidence>
<evidence type="ECO:0000305" key="3"/>
<geneLocation type="chloroplast"/>
<reference key="1">
    <citation type="journal article" date="1995" name="Plant Mol. Biol. Rep.">
        <title>Complete nucleotide sequence of the Porphyra purpurea chloroplast genome.</title>
        <authorList>
            <person name="Reith M.E."/>
            <person name="Munholland J."/>
        </authorList>
    </citation>
    <scope>NUCLEOTIDE SEQUENCE [LARGE SCALE GENOMIC DNA]</scope>
    <source>
        <strain>Avonport</strain>
    </source>
</reference>
<feature type="chain" id="PRO_0000132656" description="Small ribosomal subunit protein uS4c">
    <location>
        <begin position="1"/>
        <end position="201"/>
    </location>
</feature>
<feature type="domain" description="S4 RNA-binding">
    <location>
        <begin position="90"/>
        <end position="154"/>
    </location>
</feature>
<feature type="region of interest" description="Disordered" evidence="2">
    <location>
        <begin position="13"/>
        <end position="43"/>
    </location>
</feature>
<name>RR4_PORPU</name>
<proteinExistence type="inferred from homology"/>
<keyword id="KW-0150">Chloroplast</keyword>
<keyword id="KW-0934">Plastid</keyword>
<keyword id="KW-0687">Ribonucleoprotein</keyword>
<keyword id="KW-0689">Ribosomal protein</keyword>
<keyword id="KW-0694">RNA-binding</keyword>
<keyword id="KW-0699">rRNA-binding</keyword>
<comment type="function">
    <text evidence="1">One of the primary rRNA binding proteins, it binds directly to 16S rRNA where it nucleates assembly of the body of the 30S subunit.</text>
</comment>
<comment type="function">
    <text evidence="1">With S5 and S12 plays an important role in translational accuracy.</text>
</comment>
<comment type="subunit">
    <text evidence="1">Part of the 30S ribosomal subunit. Contacts protein S5. The interaction surface between S4 and S5 is involved in control of translational fidelity (By similarity).</text>
</comment>
<comment type="subcellular location">
    <subcellularLocation>
        <location>Plastid</location>
        <location>Chloroplast</location>
    </subcellularLocation>
</comment>
<comment type="similarity">
    <text evidence="3">Belongs to the universal ribosomal protein uS4 family.</text>
</comment>
<protein>
    <recommendedName>
        <fullName evidence="3">Small ribosomal subunit protein uS4c</fullName>
    </recommendedName>
    <alternativeName>
        <fullName>30S ribosomal protein S4, chloroplastic</fullName>
    </alternativeName>
</protein>
<dbReference type="EMBL" id="U38804">
    <property type="protein sequence ID" value="AAC08105.1"/>
    <property type="molecule type" value="Genomic_DNA"/>
</dbReference>
<dbReference type="PIR" id="S73140">
    <property type="entry name" value="S73140"/>
</dbReference>
<dbReference type="RefSeq" id="NP_053829.1">
    <property type="nucleotide sequence ID" value="NC_000925.1"/>
</dbReference>
<dbReference type="SMR" id="P51219"/>
<dbReference type="GeneID" id="809844"/>
<dbReference type="GO" id="GO:0009507">
    <property type="term" value="C:chloroplast"/>
    <property type="evidence" value="ECO:0007669"/>
    <property type="project" value="UniProtKB-SubCell"/>
</dbReference>
<dbReference type="GO" id="GO:0015935">
    <property type="term" value="C:small ribosomal subunit"/>
    <property type="evidence" value="ECO:0007669"/>
    <property type="project" value="InterPro"/>
</dbReference>
<dbReference type="GO" id="GO:0019843">
    <property type="term" value="F:rRNA binding"/>
    <property type="evidence" value="ECO:0007669"/>
    <property type="project" value="UniProtKB-UniRule"/>
</dbReference>
<dbReference type="GO" id="GO:0003735">
    <property type="term" value="F:structural constituent of ribosome"/>
    <property type="evidence" value="ECO:0007669"/>
    <property type="project" value="InterPro"/>
</dbReference>
<dbReference type="GO" id="GO:0042274">
    <property type="term" value="P:ribosomal small subunit biogenesis"/>
    <property type="evidence" value="ECO:0007669"/>
    <property type="project" value="TreeGrafter"/>
</dbReference>
<dbReference type="GO" id="GO:0006412">
    <property type="term" value="P:translation"/>
    <property type="evidence" value="ECO:0007669"/>
    <property type="project" value="UniProtKB-UniRule"/>
</dbReference>
<dbReference type="CDD" id="cd00165">
    <property type="entry name" value="S4"/>
    <property type="match status" value="1"/>
</dbReference>
<dbReference type="FunFam" id="3.10.290.10:FF:000001">
    <property type="entry name" value="30S ribosomal protein S4"/>
    <property type="match status" value="1"/>
</dbReference>
<dbReference type="FunFam" id="1.10.1050.10:FF:000002">
    <property type="entry name" value="30S ribosomal protein S4, chloroplastic"/>
    <property type="match status" value="1"/>
</dbReference>
<dbReference type="Gene3D" id="1.10.1050.10">
    <property type="entry name" value="Ribosomal Protein S4 Delta 41, Chain A, domain 1"/>
    <property type="match status" value="1"/>
</dbReference>
<dbReference type="Gene3D" id="3.10.290.10">
    <property type="entry name" value="RNA-binding S4 domain"/>
    <property type="match status" value="1"/>
</dbReference>
<dbReference type="HAMAP" id="MF_01306_B">
    <property type="entry name" value="Ribosomal_uS4_B"/>
    <property type="match status" value="1"/>
</dbReference>
<dbReference type="InterPro" id="IPR022801">
    <property type="entry name" value="Ribosomal_uS4"/>
</dbReference>
<dbReference type="InterPro" id="IPR005709">
    <property type="entry name" value="Ribosomal_uS4_bac-type"/>
</dbReference>
<dbReference type="InterPro" id="IPR018079">
    <property type="entry name" value="Ribosomal_uS4_CS"/>
</dbReference>
<dbReference type="InterPro" id="IPR001912">
    <property type="entry name" value="Ribosomal_uS4_N"/>
</dbReference>
<dbReference type="InterPro" id="IPR002942">
    <property type="entry name" value="S4_RNA-bd"/>
</dbReference>
<dbReference type="InterPro" id="IPR036986">
    <property type="entry name" value="S4_RNA-bd_sf"/>
</dbReference>
<dbReference type="NCBIfam" id="NF003717">
    <property type="entry name" value="PRK05327.1"/>
    <property type="match status" value="1"/>
</dbReference>
<dbReference type="NCBIfam" id="TIGR01017">
    <property type="entry name" value="rpsD_bact"/>
    <property type="match status" value="1"/>
</dbReference>
<dbReference type="PANTHER" id="PTHR11831">
    <property type="entry name" value="30S 40S RIBOSOMAL PROTEIN"/>
    <property type="match status" value="1"/>
</dbReference>
<dbReference type="PANTHER" id="PTHR11831:SF4">
    <property type="entry name" value="SMALL RIBOSOMAL SUBUNIT PROTEIN US4M"/>
    <property type="match status" value="1"/>
</dbReference>
<dbReference type="Pfam" id="PF00163">
    <property type="entry name" value="Ribosomal_S4"/>
    <property type="match status" value="1"/>
</dbReference>
<dbReference type="Pfam" id="PF01479">
    <property type="entry name" value="S4"/>
    <property type="match status" value="1"/>
</dbReference>
<dbReference type="SMART" id="SM01390">
    <property type="entry name" value="Ribosomal_S4"/>
    <property type="match status" value="1"/>
</dbReference>
<dbReference type="SMART" id="SM00363">
    <property type="entry name" value="S4"/>
    <property type="match status" value="1"/>
</dbReference>
<dbReference type="SUPFAM" id="SSF55174">
    <property type="entry name" value="Alpha-L RNA-binding motif"/>
    <property type="match status" value="1"/>
</dbReference>
<dbReference type="PROSITE" id="PS00632">
    <property type="entry name" value="RIBOSOMAL_S4"/>
    <property type="match status" value="1"/>
</dbReference>
<dbReference type="PROSITE" id="PS50889">
    <property type="entry name" value="S4"/>
    <property type="match status" value="1"/>
</dbReference>